<evidence type="ECO:0000250" key="1"/>
<evidence type="ECO:0000255" key="2">
    <source>
        <dbReference type="PROSITE-ProRule" id="PRU00515"/>
    </source>
</evidence>
<evidence type="ECO:0000269" key="3">
    <source>
    </source>
</evidence>
<evidence type="ECO:0000269" key="4">
    <source>
    </source>
</evidence>
<feature type="signal peptide" evidence="4">
    <location>
        <begin position="1"/>
        <end position="20"/>
    </location>
</feature>
<feature type="chain" id="PRO_0000023925" description="Monofunctional chorismate mutase">
    <location>
        <begin position="21"/>
        <end position="181"/>
    </location>
</feature>
<feature type="domain" description="Chorismate mutase" evidence="2">
    <location>
        <begin position="21"/>
        <end position="102"/>
    </location>
</feature>
<feature type="binding site" evidence="1">
    <location>
        <position position="38"/>
    </location>
    <ligand>
        <name>substrate</name>
    </ligand>
</feature>
<feature type="binding site" evidence="1">
    <location>
        <position position="49"/>
    </location>
    <ligand>
        <name>substrate</name>
    </ligand>
</feature>
<feature type="binding site" evidence="1">
    <location>
        <position position="58"/>
    </location>
    <ligand>
        <name>substrate</name>
    </ligand>
</feature>
<feature type="binding site" evidence="1">
    <location>
        <position position="62"/>
    </location>
    <ligand>
        <name>substrate</name>
    </ligand>
</feature>
<feature type="binding site" evidence="1">
    <location>
        <position position="98"/>
    </location>
    <ligand>
        <name>substrate</name>
    </ligand>
</feature>
<accession>P42517</accession>
<keyword id="KW-0028">Amino-acid biosynthesis</keyword>
<keyword id="KW-0057">Aromatic amino acid biosynthesis</keyword>
<keyword id="KW-0903">Direct protein sequencing</keyword>
<keyword id="KW-0413">Isomerase</keyword>
<keyword id="KW-0574">Periplasm</keyword>
<keyword id="KW-0584">Phenylalanine biosynthesis</keyword>
<keyword id="KW-0732">Signal</keyword>
<sequence>MTHFVAIFFSSLFMCSNVFAGSVSSVSLGSLSSALNERMQVMKAVAGYKALHHLPIEDLPREQVVLDHMLQNAQQAGLEPHSVEPFVHALMNASKTIQYRYRADWLSSPDSAVPVRDLTETRQQIQQLDTQLLTAISQRLMTGAFSQEDKEFLMSHLTAPHLSESDKNSLFASLSRIQRQH</sequence>
<proteinExistence type="evidence at protein level"/>
<name>CHMU_ENTAG</name>
<protein>
    <recommendedName>
        <fullName>Monofunctional chorismate mutase</fullName>
        <ecNumber>5.4.99.5</ecNumber>
    </recommendedName>
    <alternativeName>
        <fullName>CM-F</fullName>
    </alternativeName>
</protein>
<gene>
    <name type="primary">aroQ</name>
</gene>
<reference key="1">
    <citation type="journal article" date="1993" name="J. Bacteriol.">
        <title>The aroQ-encoded monofunctional chorismate mutase (CM-F) protein is a periplasmic enzyme in Erwinia herbicola.</title>
        <authorList>
            <person name="Xia T."/>
            <person name="Song J."/>
            <person name="Zhao G."/>
            <person name="Aldrich H."/>
            <person name="Jensen R.A."/>
        </authorList>
    </citation>
    <scope>NUCLEOTIDE SEQUENCE [GENOMIC DNA]</scope>
    <scope>PROTEIN SEQUENCE OF 21-34</scope>
    <scope>FUNCTION</scope>
    <scope>CATALYTIC ACTIVITY</scope>
    <scope>SUBUNIT</scope>
    <scope>SUBCELLULAR LOCATION</scope>
    <source>
        <strain>ATCC 33243 / DSM 4609 / NCPPB 2971</strain>
    </source>
</reference>
<reference key="2">
    <citation type="journal article" date="2001" name="Genome Biol.">
        <title>The emerging periplasm-localized subclass of AroQ chorismate mutases, exemplified by those from Salmonella typhimurium and Pseudomonas aeruginosa.</title>
        <authorList>
            <person name="Calhoun D.H."/>
            <person name="Bonner C.A."/>
            <person name="Gu W."/>
            <person name="Xie G."/>
            <person name="Jensen R.A."/>
        </authorList>
    </citation>
    <scope>BIOPHYSICOCHEMICAL PROPERTIES</scope>
    <source>
        <strain>ATCC 15277</strain>
    </source>
</reference>
<organism>
    <name type="scientific">Enterobacter agglomerans</name>
    <name type="common">Erwinia herbicola</name>
    <name type="synonym">Pantoea agglomerans</name>
    <dbReference type="NCBI Taxonomy" id="549"/>
    <lineage>
        <taxon>Bacteria</taxon>
        <taxon>Pseudomonadati</taxon>
        <taxon>Pseudomonadota</taxon>
        <taxon>Gammaproteobacteria</taxon>
        <taxon>Enterobacterales</taxon>
        <taxon>Erwiniaceae</taxon>
        <taxon>Pantoea</taxon>
        <taxon>Pantoea agglomerans group</taxon>
    </lineage>
</organism>
<comment type="function">
    <text evidence="4">Catalyzes the Claisen rearrangement of chorismate to prephenate. May sequester with cyclohexadienyl dehydratase and an aromatic aminotransferase to form phenylalanine or phenylpyruvate.</text>
</comment>
<comment type="catalytic activity">
    <reaction evidence="4">
        <text>chorismate = prephenate</text>
        <dbReference type="Rhea" id="RHEA:13897"/>
        <dbReference type="ChEBI" id="CHEBI:29748"/>
        <dbReference type="ChEBI" id="CHEBI:29934"/>
        <dbReference type="EC" id="5.4.99.5"/>
    </reaction>
</comment>
<comment type="biophysicochemical properties">
    <kinetics>
        <KM evidence="3">169 uM for chorismate (at 32 degrees Celsius)</KM>
        <text>kcat is 9.7 sec(-1) for chorismate.</text>
    </kinetics>
</comment>
<comment type="pathway">
    <text>Metabolic intermediate biosynthesis; prephenate biosynthesis; prephenate from chorismate: step 1/1.</text>
</comment>
<comment type="subunit">
    <text evidence="4">Homodimer.</text>
</comment>
<comment type="subcellular location">
    <subcellularLocation>
        <location evidence="4">Periplasm</location>
    </subcellularLocation>
</comment>
<dbReference type="EC" id="5.4.99.5"/>
<dbReference type="EMBL" id="M95628">
    <property type="protein sequence ID" value="AAA73360.1"/>
    <property type="molecule type" value="Genomic_DNA"/>
</dbReference>
<dbReference type="PIR" id="A40607">
    <property type="entry name" value="A40607"/>
</dbReference>
<dbReference type="SMR" id="P42517"/>
<dbReference type="eggNOG" id="COG1605">
    <property type="taxonomic scope" value="Bacteria"/>
</dbReference>
<dbReference type="UniPathway" id="UPA00120">
    <property type="reaction ID" value="UER00203"/>
</dbReference>
<dbReference type="GO" id="GO:0042597">
    <property type="term" value="C:periplasmic space"/>
    <property type="evidence" value="ECO:0000314"/>
    <property type="project" value="UniProtKB"/>
</dbReference>
<dbReference type="GO" id="GO:0004106">
    <property type="term" value="F:chorismate mutase activity"/>
    <property type="evidence" value="ECO:0000314"/>
    <property type="project" value="UniProtKB"/>
</dbReference>
<dbReference type="GO" id="GO:0042803">
    <property type="term" value="F:protein homodimerization activity"/>
    <property type="evidence" value="ECO:0000314"/>
    <property type="project" value="UniProtKB"/>
</dbReference>
<dbReference type="GO" id="GO:0046417">
    <property type="term" value="P:chorismate metabolic process"/>
    <property type="evidence" value="ECO:0000314"/>
    <property type="project" value="UniProtKB"/>
</dbReference>
<dbReference type="GO" id="GO:0009094">
    <property type="term" value="P:L-phenylalanine biosynthetic process"/>
    <property type="evidence" value="ECO:0000314"/>
    <property type="project" value="UniProtKB"/>
</dbReference>
<dbReference type="GO" id="GO:0009697">
    <property type="term" value="P:salicylic acid biosynthetic process"/>
    <property type="evidence" value="ECO:0007669"/>
    <property type="project" value="TreeGrafter"/>
</dbReference>
<dbReference type="FunFam" id="1.20.59.10:FF:000006">
    <property type="entry name" value="Chorismate mutase"/>
    <property type="match status" value="1"/>
</dbReference>
<dbReference type="Gene3D" id="1.20.59.10">
    <property type="entry name" value="Chorismate mutase"/>
    <property type="match status" value="1"/>
</dbReference>
<dbReference type="InterPro" id="IPR036263">
    <property type="entry name" value="Chorismate_II_sf"/>
</dbReference>
<dbReference type="InterPro" id="IPR051331">
    <property type="entry name" value="Chorismate_mutase-related"/>
</dbReference>
<dbReference type="InterPro" id="IPR008240">
    <property type="entry name" value="Chorismate_mutase_periplasmic"/>
</dbReference>
<dbReference type="InterPro" id="IPR036979">
    <property type="entry name" value="CM_dom_sf"/>
</dbReference>
<dbReference type="InterPro" id="IPR002701">
    <property type="entry name" value="CM_II_prokaryot"/>
</dbReference>
<dbReference type="NCBIfam" id="TIGR01806">
    <property type="entry name" value="CM_mono2"/>
    <property type="match status" value="1"/>
</dbReference>
<dbReference type="NCBIfam" id="NF005965">
    <property type="entry name" value="PRK08055.1"/>
    <property type="match status" value="1"/>
</dbReference>
<dbReference type="PANTHER" id="PTHR38041">
    <property type="entry name" value="CHORISMATE MUTASE"/>
    <property type="match status" value="1"/>
</dbReference>
<dbReference type="PANTHER" id="PTHR38041:SF2">
    <property type="entry name" value="SECRETED CHORISMATE MUTASE"/>
    <property type="match status" value="1"/>
</dbReference>
<dbReference type="Pfam" id="PF01817">
    <property type="entry name" value="CM_2"/>
    <property type="match status" value="1"/>
</dbReference>
<dbReference type="PIRSF" id="PIRSF026640">
    <property type="entry name" value="Peripl_chor_mut"/>
    <property type="match status" value="1"/>
</dbReference>
<dbReference type="SMART" id="SM00830">
    <property type="entry name" value="CM_2"/>
    <property type="match status" value="1"/>
</dbReference>
<dbReference type="SUPFAM" id="SSF48600">
    <property type="entry name" value="Chorismate mutase II"/>
    <property type="match status" value="1"/>
</dbReference>
<dbReference type="PROSITE" id="PS51168">
    <property type="entry name" value="CHORISMATE_MUT_2"/>
    <property type="match status" value="1"/>
</dbReference>